<organism>
    <name type="scientific">Escherichia coli O1:K1 / APEC</name>
    <dbReference type="NCBI Taxonomy" id="405955"/>
    <lineage>
        <taxon>Bacteria</taxon>
        <taxon>Pseudomonadati</taxon>
        <taxon>Pseudomonadota</taxon>
        <taxon>Gammaproteobacteria</taxon>
        <taxon>Enterobacterales</taxon>
        <taxon>Enterobacteriaceae</taxon>
        <taxon>Escherichia</taxon>
    </lineage>
</organism>
<reference key="1">
    <citation type="journal article" date="2007" name="J. Bacteriol.">
        <title>The genome sequence of avian pathogenic Escherichia coli strain O1:K1:H7 shares strong similarities with human extraintestinal pathogenic E. coli genomes.</title>
        <authorList>
            <person name="Johnson T.J."/>
            <person name="Kariyawasam S."/>
            <person name="Wannemuehler Y."/>
            <person name="Mangiamele P."/>
            <person name="Johnson S.J."/>
            <person name="Doetkott C."/>
            <person name="Skyberg J.A."/>
            <person name="Lynne A.M."/>
            <person name="Johnson J.R."/>
            <person name="Nolan L.K."/>
        </authorList>
    </citation>
    <scope>NUCLEOTIDE SEQUENCE [LARGE SCALE GENOMIC DNA]</scope>
</reference>
<sequence>MKKTQQKEIENVTNITGVRQIELWRRDDLQHPRLDEVAEEVPVALVYNGISHVVMMASPKDLEYFALGFSLSEGIIESPRDIFGMDVVPSCNGLEVQIELSSRRFMGLKERRRALAGRTGCGVCGVEQLNDIGKPVQPLPFTQTFDLNKLDDALRHLNDFQPVGQLTGCTHAAAWMLPSGELVGGHEDVGRHVALDKLLGRRSQEGESWQQGAVLVSSRASYEMVQKSAMCGVEILFAVSAATTLAVEVAERCNLTLVGFCKPGRATVYTHPQRLSN</sequence>
<comment type="function">
    <text evidence="1">Required for formate dehydrogenase (FDH) activity. Acts as a sulfur carrier protein that transfers sulfur from IscS to the molybdenum cofactor prior to its insertion into FDH.</text>
</comment>
<comment type="subcellular location">
    <subcellularLocation>
        <location evidence="1">Cytoplasm</location>
    </subcellularLocation>
</comment>
<comment type="similarity">
    <text evidence="1">Belongs to the FdhD family.</text>
</comment>
<feature type="chain" id="PRO_1000020813" description="Sulfur carrier protein FdhD">
    <location>
        <begin position="1"/>
        <end position="277"/>
    </location>
</feature>
<feature type="active site" description="Cysteine persulfide intermediate" evidence="1">
    <location>
        <position position="121"/>
    </location>
</feature>
<feature type="binding site" evidence="1">
    <location>
        <begin position="260"/>
        <end position="265"/>
    </location>
    <ligand>
        <name>Mo-bis(molybdopterin guanine dinucleotide)</name>
        <dbReference type="ChEBI" id="CHEBI:60539"/>
    </ligand>
</feature>
<gene>
    <name evidence="1" type="primary">fdhD</name>
    <name type="ordered locus">Ecok1_38710</name>
    <name type="ORF">APECO1_2570</name>
</gene>
<keyword id="KW-0963">Cytoplasm</keyword>
<keyword id="KW-0501">Molybdenum cofactor biosynthesis</keyword>
<keyword id="KW-1185">Reference proteome</keyword>
<accession>A1AI75</accession>
<dbReference type="EMBL" id="CP000468">
    <property type="protein sequence ID" value="ABJ03365.1"/>
    <property type="molecule type" value="Genomic_DNA"/>
</dbReference>
<dbReference type="RefSeq" id="WP_000753589.1">
    <property type="nucleotide sequence ID" value="NZ_CADILS010000014.1"/>
</dbReference>
<dbReference type="SMR" id="A1AI75"/>
<dbReference type="GeneID" id="75174135"/>
<dbReference type="KEGG" id="ecv:APECO1_2570"/>
<dbReference type="HOGENOM" id="CLU_056887_2_0_6"/>
<dbReference type="Proteomes" id="UP000008216">
    <property type="component" value="Chromosome"/>
</dbReference>
<dbReference type="GO" id="GO:0005737">
    <property type="term" value="C:cytoplasm"/>
    <property type="evidence" value="ECO:0007669"/>
    <property type="project" value="UniProtKB-SubCell"/>
</dbReference>
<dbReference type="GO" id="GO:0097163">
    <property type="term" value="F:sulfur carrier activity"/>
    <property type="evidence" value="ECO:0007669"/>
    <property type="project" value="UniProtKB-UniRule"/>
</dbReference>
<dbReference type="GO" id="GO:0016783">
    <property type="term" value="F:sulfurtransferase activity"/>
    <property type="evidence" value="ECO:0007669"/>
    <property type="project" value="InterPro"/>
</dbReference>
<dbReference type="GO" id="GO:0006777">
    <property type="term" value="P:Mo-molybdopterin cofactor biosynthetic process"/>
    <property type="evidence" value="ECO:0007669"/>
    <property type="project" value="UniProtKB-UniRule"/>
</dbReference>
<dbReference type="FunFam" id="3.10.20.10:FF:000003">
    <property type="entry name" value="Sulfur carrier protein FdhD"/>
    <property type="match status" value="1"/>
</dbReference>
<dbReference type="FunFam" id="3.40.140.10:FF:000027">
    <property type="entry name" value="Sulfur carrier protein FdhD"/>
    <property type="match status" value="1"/>
</dbReference>
<dbReference type="Gene3D" id="3.10.20.10">
    <property type="match status" value="1"/>
</dbReference>
<dbReference type="Gene3D" id="3.40.140.10">
    <property type="entry name" value="Cytidine Deaminase, domain 2"/>
    <property type="match status" value="1"/>
</dbReference>
<dbReference type="HAMAP" id="MF_00187">
    <property type="entry name" value="FdhD"/>
    <property type="match status" value="1"/>
</dbReference>
<dbReference type="InterPro" id="IPR016193">
    <property type="entry name" value="Cytidine_deaminase-like"/>
</dbReference>
<dbReference type="InterPro" id="IPR003786">
    <property type="entry name" value="FdhD"/>
</dbReference>
<dbReference type="NCBIfam" id="TIGR00129">
    <property type="entry name" value="fdhD_narQ"/>
    <property type="match status" value="1"/>
</dbReference>
<dbReference type="PANTHER" id="PTHR30592">
    <property type="entry name" value="FORMATE DEHYDROGENASE"/>
    <property type="match status" value="1"/>
</dbReference>
<dbReference type="PANTHER" id="PTHR30592:SF1">
    <property type="entry name" value="SULFUR CARRIER PROTEIN FDHD"/>
    <property type="match status" value="1"/>
</dbReference>
<dbReference type="Pfam" id="PF02634">
    <property type="entry name" value="FdhD-NarQ"/>
    <property type="match status" value="1"/>
</dbReference>
<dbReference type="PIRSF" id="PIRSF015626">
    <property type="entry name" value="FdhD"/>
    <property type="match status" value="1"/>
</dbReference>
<dbReference type="SUPFAM" id="SSF53927">
    <property type="entry name" value="Cytidine deaminase-like"/>
    <property type="match status" value="1"/>
</dbReference>
<name>FDHD_ECOK1</name>
<protein>
    <recommendedName>
        <fullName evidence="1">Sulfur carrier protein FdhD</fullName>
    </recommendedName>
</protein>
<evidence type="ECO:0000255" key="1">
    <source>
        <dbReference type="HAMAP-Rule" id="MF_00187"/>
    </source>
</evidence>
<proteinExistence type="inferred from homology"/>